<name>KEFG_ECO8A</name>
<keyword id="KW-0997">Cell inner membrane</keyword>
<keyword id="KW-1003">Cell membrane</keyword>
<keyword id="KW-0472">Membrane</keyword>
<keyword id="KW-0520">NAD</keyword>
<keyword id="KW-0560">Oxidoreductase</keyword>
<organism>
    <name type="scientific">Escherichia coli O8 (strain IAI1)</name>
    <dbReference type="NCBI Taxonomy" id="585034"/>
    <lineage>
        <taxon>Bacteria</taxon>
        <taxon>Pseudomonadati</taxon>
        <taxon>Pseudomonadota</taxon>
        <taxon>Gammaproteobacteria</taxon>
        <taxon>Enterobacterales</taxon>
        <taxon>Enterobacteriaceae</taxon>
        <taxon>Escherichia</taxon>
    </lineage>
</organism>
<feature type="chain" id="PRO_1000145574" description="Glutathione-regulated potassium-efflux system ancillary protein KefG">
    <location>
        <begin position="1"/>
        <end position="184"/>
    </location>
</feature>
<accession>B7M1Q3</accession>
<evidence type="ECO:0000255" key="1">
    <source>
        <dbReference type="HAMAP-Rule" id="MF_01415"/>
    </source>
</evidence>
<protein>
    <recommendedName>
        <fullName evidence="1">Glutathione-regulated potassium-efflux system ancillary protein KefG</fullName>
    </recommendedName>
    <alternativeName>
        <fullName evidence="1">Putative quinone oxidoreductase KefG</fullName>
        <ecNumber evidence="1">1.6.5.2</ecNumber>
    </alternativeName>
</protein>
<sequence length="184" mass="20958">MMSQPAKVLLLYAHPESQDSVANRVLLKPATQLSNVTVHDLYAHYPDFFIDIPREQALLREHEVIVFQHPLYTYSCPALLKEWLDRVLSRGFASGPGGNQLAGKYWRSVITTGEPESAYRYDALNRYPMSDVLRPFELAAGMCRMHWLSPIIIYWARRQSAQELASHARAYGDWLANPLSPGGR</sequence>
<gene>
    <name evidence="1" type="primary">kefG</name>
    <name type="ordered locus">ECIAI1_3488</name>
</gene>
<dbReference type="EC" id="1.6.5.2" evidence="1"/>
<dbReference type="EMBL" id="CU928160">
    <property type="protein sequence ID" value="CAR00290.1"/>
    <property type="molecule type" value="Genomic_DNA"/>
</dbReference>
<dbReference type="SMR" id="B7M1Q3"/>
<dbReference type="KEGG" id="ecr:ECIAI1_3488"/>
<dbReference type="HOGENOM" id="CLU_058643_0_1_6"/>
<dbReference type="GO" id="GO:0005886">
    <property type="term" value="C:plasma membrane"/>
    <property type="evidence" value="ECO:0007669"/>
    <property type="project" value="UniProtKB-SubCell"/>
</dbReference>
<dbReference type="GO" id="GO:0009055">
    <property type="term" value="F:electron transfer activity"/>
    <property type="evidence" value="ECO:0007669"/>
    <property type="project" value="TreeGrafter"/>
</dbReference>
<dbReference type="GO" id="GO:0010181">
    <property type="term" value="F:FMN binding"/>
    <property type="evidence" value="ECO:0007669"/>
    <property type="project" value="TreeGrafter"/>
</dbReference>
<dbReference type="GO" id="GO:0050136">
    <property type="term" value="F:NADH:ubiquinone reductase (non-electrogenic) activity"/>
    <property type="evidence" value="ECO:0007669"/>
    <property type="project" value="RHEA"/>
</dbReference>
<dbReference type="GO" id="GO:0008753">
    <property type="term" value="F:NADPH dehydrogenase (quinone) activity"/>
    <property type="evidence" value="ECO:0007669"/>
    <property type="project" value="RHEA"/>
</dbReference>
<dbReference type="GO" id="GO:1901381">
    <property type="term" value="P:positive regulation of potassium ion transmembrane transport"/>
    <property type="evidence" value="ECO:0007669"/>
    <property type="project" value="UniProtKB-UniRule"/>
</dbReference>
<dbReference type="GO" id="GO:0006813">
    <property type="term" value="P:potassium ion transport"/>
    <property type="evidence" value="ECO:0007669"/>
    <property type="project" value="InterPro"/>
</dbReference>
<dbReference type="FunFam" id="3.40.50.360:FF:000013">
    <property type="entry name" value="Glutathione-regulated potassium-efflux system ancillary protein KefG"/>
    <property type="match status" value="1"/>
</dbReference>
<dbReference type="Gene3D" id="3.40.50.360">
    <property type="match status" value="1"/>
</dbReference>
<dbReference type="HAMAP" id="MF_01415">
    <property type="entry name" value="K_H_efflux_KefG"/>
    <property type="match status" value="1"/>
</dbReference>
<dbReference type="InterPro" id="IPR003680">
    <property type="entry name" value="Flavodoxin_fold"/>
</dbReference>
<dbReference type="InterPro" id="IPR029039">
    <property type="entry name" value="Flavoprotein-like_sf"/>
</dbReference>
<dbReference type="InterPro" id="IPR023947">
    <property type="entry name" value="K_H_efflux_KefG"/>
</dbReference>
<dbReference type="InterPro" id="IPR046980">
    <property type="entry name" value="KefG/KefF"/>
</dbReference>
<dbReference type="NCBIfam" id="NF003430">
    <property type="entry name" value="PRK04930.1"/>
    <property type="match status" value="1"/>
</dbReference>
<dbReference type="PANTHER" id="PTHR47307">
    <property type="entry name" value="GLUTATHIONE-REGULATED POTASSIUM-EFFLUX SYSTEM ANCILLARY PROTEIN KEFG"/>
    <property type="match status" value="1"/>
</dbReference>
<dbReference type="PANTHER" id="PTHR47307:SF1">
    <property type="entry name" value="GLUTATHIONE-REGULATED POTASSIUM-EFFLUX SYSTEM ANCILLARY PROTEIN KEFG"/>
    <property type="match status" value="1"/>
</dbReference>
<dbReference type="Pfam" id="PF02525">
    <property type="entry name" value="Flavodoxin_2"/>
    <property type="match status" value="1"/>
</dbReference>
<dbReference type="SUPFAM" id="SSF52218">
    <property type="entry name" value="Flavoproteins"/>
    <property type="match status" value="1"/>
</dbReference>
<proteinExistence type="inferred from homology"/>
<reference key="1">
    <citation type="journal article" date="2009" name="PLoS Genet.">
        <title>Organised genome dynamics in the Escherichia coli species results in highly diverse adaptive paths.</title>
        <authorList>
            <person name="Touchon M."/>
            <person name="Hoede C."/>
            <person name="Tenaillon O."/>
            <person name="Barbe V."/>
            <person name="Baeriswyl S."/>
            <person name="Bidet P."/>
            <person name="Bingen E."/>
            <person name="Bonacorsi S."/>
            <person name="Bouchier C."/>
            <person name="Bouvet O."/>
            <person name="Calteau A."/>
            <person name="Chiapello H."/>
            <person name="Clermont O."/>
            <person name="Cruveiller S."/>
            <person name="Danchin A."/>
            <person name="Diard M."/>
            <person name="Dossat C."/>
            <person name="Karoui M.E."/>
            <person name="Frapy E."/>
            <person name="Garry L."/>
            <person name="Ghigo J.M."/>
            <person name="Gilles A.M."/>
            <person name="Johnson J."/>
            <person name="Le Bouguenec C."/>
            <person name="Lescat M."/>
            <person name="Mangenot S."/>
            <person name="Martinez-Jehanne V."/>
            <person name="Matic I."/>
            <person name="Nassif X."/>
            <person name="Oztas S."/>
            <person name="Petit M.A."/>
            <person name="Pichon C."/>
            <person name="Rouy Z."/>
            <person name="Ruf C.S."/>
            <person name="Schneider D."/>
            <person name="Tourret J."/>
            <person name="Vacherie B."/>
            <person name="Vallenet D."/>
            <person name="Medigue C."/>
            <person name="Rocha E.P.C."/>
            <person name="Denamur E."/>
        </authorList>
    </citation>
    <scope>NUCLEOTIDE SEQUENCE [LARGE SCALE GENOMIC DNA]</scope>
    <source>
        <strain>IAI1</strain>
    </source>
</reference>
<comment type="function">
    <text evidence="1">Regulatory subunit of a potassium efflux system that confers protection against electrophiles. Required for full activity of KefB.</text>
</comment>
<comment type="catalytic activity">
    <reaction evidence="1">
        <text>a quinone + NADH + H(+) = a quinol + NAD(+)</text>
        <dbReference type="Rhea" id="RHEA:46160"/>
        <dbReference type="ChEBI" id="CHEBI:15378"/>
        <dbReference type="ChEBI" id="CHEBI:24646"/>
        <dbReference type="ChEBI" id="CHEBI:57540"/>
        <dbReference type="ChEBI" id="CHEBI:57945"/>
        <dbReference type="ChEBI" id="CHEBI:132124"/>
        <dbReference type="EC" id="1.6.5.2"/>
    </reaction>
</comment>
<comment type="catalytic activity">
    <reaction evidence="1">
        <text>a quinone + NADPH + H(+) = a quinol + NADP(+)</text>
        <dbReference type="Rhea" id="RHEA:46164"/>
        <dbReference type="ChEBI" id="CHEBI:15378"/>
        <dbReference type="ChEBI" id="CHEBI:24646"/>
        <dbReference type="ChEBI" id="CHEBI:57783"/>
        <dbReference type="ChEBI" id="CHEBI:58349"/>
        <dbReference type="ChEBI" id="CHEBI:132124"/>
        <dbReference type="EC" id="1.6.5.2"/>
    </reaction>
</comment>
<comment type="subunit">
    <text evidence="1">Interacts with KefB.</text>
</comment>
<comment type="subcellular location">
    <subcellularLocation>
        <location evidence="1">Cell inner membrane</location>
        <topology evidence="1">Peripheral membrane protein</topology>
        <orientation evidence="1">Cytoplasmic side</orientation>
    </subcellularLocation>
</comment>
<comment type="similarity">
    <text evidence="1">Belongs to the NAD(P)H dehydrogenase (quinone) family. KefG subfamily.</text>
</comment>